<name>ARL1_YEAST</name>
<sequence>MGNIFSSMFDKLWGSNKELRILILGLDGAGKTTILYRLQIGEVVTTKPTIGFNVETLSYKNLKLNVWDLGGQTSIRPYWRCYYADTAAVIFVVDSTDKDRMSTASKELHLMLQEEELQDAALLVFANKQDQPGALSASEVSKELNLVELKDRSWSIVASSAIKGEGITEGLDWLIDVIKEEQL</sequence>
<dbReference type="EMBL" id="U89332">
    <property type="protein sequence ID" value="AAC49875.1"/>
    <property type="molecule type" value="mRNA"/>
</dbReference>
<dbReference type="EMBL" id="Z36033">
    <property type="protein sequence ID" value="CAA85125.1"/>
    <property type="molecule type" value="Genomic_DNA"/>
</dbReference>
<dbReference type="EMBL" id="BK006936">
    <property type="protein sequence ID" value="DAA07280.1"/>
    <property type="molecule type" value="Genomic_DNA"/>
</dbReference>
<dbReference type="PIR" id="S46035">
    <property type="entry name" value="S46035"/>
</dbReference>
<dbReference type="RefSeq" id="NP_009723.3">
    <property type="nucleotide sequence ID" value="NM_001178512.3"/>
</dbReference>
<dbReference type="PDB" id="1MOZ">
    <property type="method" value="X-ray"/>
    <property type="resolution" value="3.17 A"/>
    <property type="chains" value="A/B=1-183"/>
</dbReference>
<dbReference type="PDB" id="8EZJ">
    <property type="method" value="EM"/>
    <property type="resolution" value="3.30 A"/>
    <property type="chains" value="C/D=18-183"/>
</dbReference>
<dbReference type="PDBsum" id="1MOZ"/>
<dbReference type="PDBsum" id="8EZJ"/>
<dbReference type="EMDB" id="EMD-28743"/>
<dbReference type="SMR" id="P38116"/>
<dbReference type="BioGRID" id="32864">
    <property type="interactions" value="437"/>
</dbReference>
<dbReference type="ComplexPortal" id="CPX-1028">
    <property type="entry name" value="NEO1-MON2-ARL1-DOP1 membrane remodeling complex"/>
</dbReference>
<dbReference type="FunCoup" id="P38116">
    <property type="interactions" value="600"/>
</dbReference>
<dbReference type="IntAct" id="P38116">
    <property type="interactions" value="17"/>
</dbReference>
<dbReference type="MINT" id="P38116"/>
<dbReference type="STRING" id="4932.YBR164C"/>
<dbReference type="TCDB" id="3.A.30.1.1">
    <property type="family name" value="the endoplasmic reticulum surface retrieval pathway (er-surf) family"/>
</dbReference>
<dbReference type="iPTMnet" id="P38116"/>
<dbReference type="PaxDb" id="4932-YBR164C"/>
<dbReference type="PeptideAtlas" id="P38116"/>
<dbReference type="EnsemblFungi" id="YBR164C_mRNA">
    <property type="protein sequence ID" value="YBR164C"/>
    <property type="gene ID" value="YBR164C"/>
</dbReference>
<dbReference type="GeneID" id="852462"/>
<dbReference type="KEGG" id="sce:YBR164C"/>
<dbReference type="AGR" id="SGD:S000000368"/>
<dbReference type="SGD" id="S000000368">
    <property type="gene designation" value="ARL1"/>
</dbReference>
<dbReference type="VEuPathDB" id="FungiDB:YBR164C"/>
<dbReference type="eggNOG" id="KOG0072">
    <property type="taxonomic scope" value="Eukaryota"/>
</dbReference>
<dbReference type="GeneTree" id="ENSGT00940000155118"/>
<dbReference type="HOGENOM" id="CLU_040729_9_3_1"/>
<dbReference type="InParanoid" id="P38116"/>
<dbReference type="OMA" id="VRWSKDQ"/>
<dbReference type="OrthoDB" id="2011769at2759"/>
<dbReference type="BioCyc" id="YEAST:G3O-29114-MONOMER"/>
<dbReference type="Reactome" id="R-SCE-6811440">
    <property type="pathway name" value="Retrograde transport at the Trans-Golgi-Network"/>
</dbReference>
<dbReference type="BioGRID-ORCS" id="852462">
    <property type="hits" value="0 hits in 10 CRISPR screens"/>
</dbReference>
<dbReference type="EvolutionaryTrace" id="P38116"/>
<dbReference type="PRO" id="PR:P38116"/>
<dbReference type="Proteomes" id="UP000002311">
    <property type="component" value="Chromosome II"/>
</dbReference>
<dbReference type="RNAct" id="P38116">
    <property type="molecule type" value="protein"/>
</dbReference>
<dbReference type="GO" id="GO:0005737">
    <property type="term" value="C:cytoplasm"/>
    <property type="evidence" value="ECO:0000318"/>
    <property type="project" value="GO_Central"/>
</dbReference>
<dbReference type="GO" id="GO:0005829">
    <property type="term" value="C:cytosol"/>
    <property type="evidence" value="ECO:0000314"/>
    <property type="project" value="SGD"/>
</dbReference>
<dbReference type="GO" id="GO:0010008">
    <property type="term" value="C:endosome membrane"/>
    <property type="evidence" value="ECO:0000303"/>
    <property type="project" value="ComplexPortal"/>
</dbReference>
<dbReference type="GO" id="GO:0005794">
    <property type="term" value="C:Golgi apparatus"/>
    <property type="evidence" value="ECO:0000314"/>
    <property type="project" value="SGD"/>
</dbReference>
<dbReference type="GO" id="GO:0000407">
    <property type="term" value="C:phagophore assembly site"/>
    <property type="evidence" value="ECO:0000315"/>
    <property type="project" value="SGD"/>
</dbReference>
<dbReference type="GO" id="GO:0005802">
    <property type="term" value="C:trans-Golgi network"/>
    <property type="evidence" value="ECO:0000314"/>
    <property type="project" value="SGD"/>
</dbReference>
<dbReference type="GO" id="GO:0005525">
    <property type="term" value="F:GTP binding"/>
    <property type="evidence" value="ECO:0000318"/>
    <property type="project" value="GO_Central"/>
</dbReference>
<dbReference type="GO" id="GO:0003924">
    <property type="term" value="F:GTPase activity"/>
    <property type="evidence" value="ECO:0000314"/>
    <property type="project" value="SGD"/>
</dbReference>
<dbReference type="GO" id="GO:0034605">
    <property type="term" value="P:cellular response to heat"/>
    <property type="evidence" value="ECO:0000315"/>
    <property type="project" value="SGD"/>
</dbReference>
<dbReference type="GO" id="GO:0006995">
    <property type="term" value="P:cellular response to nitrogen starvation"/>
    <property type="evidence" value="ECO:0000315"/>
    <property type="project" value="SGD"/>
</dbReference>
<dbReference type="GO" id="GO:0032258">
    <property type="term" value="P:cytoplasm to vacuole targeting by the Cvt pathway"/>
    <property type="evidence" value="ECO:0000315"/>
    <property type="project" value="SGD"/>
</dbReference>
<dbReference type="GO" id="GO:0006897">
    <property type="term" value="P:endocytosis"/>
    <property type="evidence" value="ECO:0000315"/>
    <property type="project" value="SGD"/>
</dbReference>
<dbReference type="GO" id="GO:0043001">
    <property type="term" value="P:Golgi to plasma membrane protein transport"/>
    <property type="evidence" value="ECO:0000315"/>
    <property type="project" value="SGD"/>
</dbReference>
<dbReference type="GO" id="GO:0006886">
    <property type="term" value="P:intracellular protein transport"/>
    <property type="evidence" value="ECO:0000318"/>
    <property type="project" value="GO_Central"/>
</dbReference>
<dbReference type="GO" id="GO:0016236">
    <property type="term" value="P:macroautophagy"/>
    <property type="evidence" value="ECO:0000315"/>
    <property type="project" value="SGD"/>
</dbReference>
<dbReference type="GO" id="GO:0034067">
    <property type="term" value="P:protein localization to Golgi apparatus"/>
    <property type="evidence" value="ECO:0000315"/>
    <property type="project" value="SGD"/>
</dbReference>
<dbReference type="GO" id="GO:0034497">
    <property type="term" value="P:protein localization to phagophore assembly site"/>
    <property type="evidence" value="ECO:0000315"/>
    <property type="project" value="SGD"/>
</dbReference>
<dbReference type="GO" id="GO:0006623">
    <property type="term" value="P:protein targeting to vacuole"/>
    <property type="evidence" value="ECO:0000315"/>
    <property type="project" value="SGD"/>
</dbReference>
<dbReference type="GO" id="GO:0031503">
    <property type="term" value="P:protein-containing complex localization"/>
    <property type="evidence" value="ECO:0000315"/>
    <property type="project" value="SGD"/>
</dbReference>
<dbReference type="GO" id="GO:0034976">
    <property type="term" value="P:response to endoplasmic reticulum stress"/>
    <property type="evidence" value="ECO:0000315"/>
    <property type="project" value="SGD"/>
</dbReference>
<dbReference type="GO" id="GO:0098629">
    <property type="term" value="P:trans-Golgi network membrane organization"/>
    <property type="evidence" value="ECO:0000303"/>
    <property type="project" value="ComplexPortal"/>
</dbReference>
<dbReference type="GO" id="GO:0016192">
    <property type="term" value="P:vesicle-mediated transport"/>
    <property type="evidence" value="ECO:0000315"/>
    <property type="project" value="SGD"/>
</dbReference>
<dbReference type="CDD" id="cd04151">
    <property type="entry name" value="Arl1"/>
    <property type="match status" value="1"/>
</dbReference>
<dbReference type="FunFam" id="3.40.50.300:FF:000510">
    <property type="entry name" value="ADP-ribosylation factor 1"/>
    <property type="match status" value="1"/>
</dbReference>
<dbReference type="Gene3D" id="3.40.50.300">
    <property type="entry name" value="P-loop containing nucleotide triphosphate hydrolases"/>
    <property type="match status" value="1"/>
</dbReference>
<dbReference type="InterPro" id="IPR027417">
    <property type="entry name" value="P-loop_NTPase"/>
</dbReference>
<dbReference type="InterPro" id="IPR005225">
    <property type="entry name" value="Small_GTP-bd"/>
</dbReference>
<dbReference type="InterPro" id="IPR024156">
    <property type="entry name" value="Small_GTPase_ARF"/>
</dbReference>
<dbReference type="InterPro" id="IPR006689">
    <property type="entry name" value="Small_GTPase_ARF/SAR"/>
</dbReference>
<dbReference type="NCBIfam" id="TIGR00231">
    <property type="entry name" value="small_GTP"/>
    <property type="match status" value="1"/>
</dbReference>
<dbReference type="PANTHER" id="PTHR11711">
    <property type="entry name" value="ADP RIBOSYLATION FACTOR-RELATED"/>
    <property type="match status" value="1"/>
</dbReference>
<dbReference type="Pfam" id="PF00025">
    <property type="entry name" value="Arf"/>
    <property type="match status" value="1"/>
</dbReference>
<dbReference type="PRINTS" id="PR00328">
    <property type="entry name" value="SAR1GTPBP"/>
</dbReference>
<dbReference type="SMART" id="SM00177">
    <property type="entry name" value="ARF"/>
    <property type="match status" value="1"/>
</dbReference>
<dbReference type="SMART" id="SM00175">
    <property type="entry name" value="RAB"/>
    <property type="match status" value="1"/>
</dbReference>
<dbReference type="SMART" id="SM00178">
    <property type="entry name" value="SAR"/>
    <property type="match status" value="1"/>
</dbReference>
<dbReference type="SUPFAM" id="SSF52540">
    <property type="entry name" value="P-loop containing nucleoside triphosphate hydrolases"/>
    <property type="match status" value="1"/>
</dbReference>
<dbReference type="PROSITE" id="PS51417">
    <property type="entry name" value="ARF"/>
    <property type="match status" value="1"/>
</dbReference>
<keyword id="KW-0002">3D-structure</keyword>
<keyword id="KW-0931">ER-Golgi transport</keyword>
<keyword id="KW-0333">Golgi apparatus</keyword>
<keyword id="KW-0342">GTP-binding</keyword>
<keyword id="KW-0449">Lipoprotein</keyword>
<keyword id="KW-0519">Myristate</keyword>
<keyword id="KW-0547">Nucleotide-binding</keyword>
<keyword id="KW-0653">Protein transport</keyword>
<keyword id="KW-1185">Reference proteome</keyword>
<keyword id="KW-0813">Transport</keyword>
<organism>
    <name type="scientific">Saccharomyces cerevisiae (strain ATCC 204508 / S288c)</name>
    <name type="common">Baker's yeast</name>
    <dbReference type="NCBI Taxonomy" id="559292"/>
    <lineage>
        <taxon>Eukaryota</taxon>
        <taxon>Fungi</taxon>
        <taxon>Dikarya</taxon>
        <taxon>Ascomycota</taxon>
        <taxon>Saccharomycotina</taxon>
        <taxon>Saccharomycetes</taxon>
        <taxon>Saccharomycetales</taxon>
        <taxon>Saccharomycetaceae</taxon>
        <taxon>Saccharomyces</taxon>
    </lineage>
</organism>
<comment type="function">
    <text evidence="3 4 5">Recruits golgins such as IMH1 to the Golgi. Can bind and hydrolyze GTP. May be involved in trafficking events within the endosomal system.</text>
</comment>
<comment type="subunit">
    <text evidence="2 3 4 5">Homodimer (PubMed:11535602). Interacts with IMH1 (via GRIP domain); the interaction is dependent on GTP (PubMed:12620188, PubMed:12620189). Interacts with MON2 (PubMed:12052896).</text>
</comment>
<comment type="interaction">
    <interactant intactId="EBI-2869">
        <id>P38116</id>
    </interactant>
    <interactant intactId="EBI-33343">
        <id>Q06704</id>
        <label>IMH1</label>
    </interactant>
    <organismsDiffer>false</organismsDiffer>
    <experiments>3</experiments>
</comment>
<comment type="interaction">
    <interactant intactId="EBI-2869">
        <id>P38116</id>
    </interactant>
    <interactant intactId="EBI-25828">
        <id>P47061</id>
        <label>VPS53</label>
    </interactant>
    <organismsDiffer>false</organismsDiffer>
    <experiments>3</experiments>
</comment>
<comment type="interaction">
    <interactant intactId="EBI-2869">
        <id>P38116</id>
    </interactant>
    <interactant intactId="EBI-36751">
        <id>Q12071</id>
        <label>VPS54</label>
    </interactant>
    <organismsDiffer>false</organismsDiffer>
    <experiments>3</experiments>
</comment>
<comment type="subcellular location">
    <subcellularLocation>
        <location evidence="4 5">Golgi apparatus</location>
    </subcellularLocation>
</comment>
<comment type="disruption phenotype">
    <text evidence="7">Decreases the physical interaction between MON2 and DOP1.</text>
</comment>
<comment type="miscellaneous">
    <text evidence="6">Present with 5190 molecules/cell in log phase SD medium.</text>
</comment>
<comment type="similarity">
    <text evidence="9">Belongs to the small GTPase superfamily. Arf family.</text>
</comment>
<evidence type="ECO:0000250" key="1"/>
<evidence type="ECO:0000269" key="2">
    <source>
    </source>
</evidence>
<evidence type="ECO:0000269" key="3">
    <source>
    </source>
</evidence>
<evidence type="ECO:0000269" key="4">
    <source>
    </source>
</evidence>
<evidence type="ECO:0000269" key="5">
    <source>
    </source>
</evidence>
<evidence type="ECO:0000269" key="6">
    <source>
    </source>
</evidence>
<evidence type="ECO:0000269" key="7">
    <source>
    </source>
</evidence>
<evidence type="ECO:0000269" key="8">
    <source>
    </source>
</evidence>
<evidence type="ECO:0000305" key="9"/>
<evidence type="ECO:0007829" key="10">
    <source>
        <dbReference type="PDB" id="1MOZ"/>
    </source>
</evidence>
<evidence type="ECO:0007829" key="11">
    <source>
        <dbReference type="PDB" id="8EZJ"/>
    </source>
</evidence>
<gene>
    <name type="primary">ARL1</name>
    <name type="synonym">ARF3</name>
    <name type="ordered locus">YBR164C</name>
    <name type="ORF">YBR1216</name>
</gene>
<feature type="initiator methionine" description="Removed">
    <location>
        <position position="1"/>
    </location>
</feature>
<feature type="chain" id="PRO_0000207421" description="ADP-ribosylation factor-like protein 1">
    <location>
        <begin position="2"/>
        <end position="183"/>
    </location>
</feature>
<feature type="binding site" evidence="1">
    <location>
        <begin position="25"/>
        <end position="32"/>
    </location>
    <ligand>
        <name>GTP</name>
        <dbReference type="ChEBI" id="CHEBI:37565"/>
    </ligand>
</feature>
<feature type="binding site" evidence="1">
    <location>
        <begin position="68"/>
        <end position="72"/>
    </location>
    <ligand>
        <name>GTP</name>
        <dbReference type="ChEBI" id="CHEBI:37565"/>
    </ligand>
</feature>
<feature type="binding site" evidence="1">
    <location>
        <begin position="127"/>
        <end position="130"/>
    </location>
    <ligand>
        <name>GTP</name>
        <dbReference type="ChEBI" id="CHEBI:37565"/>
    </ligand>
</feature>
<feature type="lipid moiety-binding region" description="N-myristoyl glycine" evidence="8">
    <location>
        <position position="2"/>
    </location>
</feature>
<feature type="helix" evidence="10">
    <location>
        <begin position="3"/>
        <end position="9"/>
    </location>
</feature>
<feature type="helix" evidence="10">
    <location>
        <begin position="10"/>
        <end position="12"/>
    </location>
</feature>
<feature type="strand" evidence="10">
    <location>
        <begin position="19"/>
        <end position="26"/>
    </location>
</feature>
<feature type="helix" evidence="10">
    <location>
        <begin position="31"/>
        <end position="37"/>
    </location>
</feature>
<feature type="strand" evidence="10">
    <location>
        <begin position="41"/>
        <end position="46"/>
    </location>
</feature>
<feature type="strand" evidence="10">
    <location>
        <begin position="54"/>
        <end position="59"/>
    </location>
</feature>
<feature type="strand" evidence="10">
    <location>
        <begin position="62"/>
        <end position="69"/>
    </location>
</feature>
<feature type="turn" evidence="11">
    <location>
        <begin position="72"/>
        <end position="74"/>
    </location>
</feature>
<feature type="helix" evidence="10">
    <location>
        <begin position="79"/>
        <end position="81"/>
    </location>
</feature>
<feature type="turn" evidence="10">
    <location>
        <begin position="82"/>
        <end position="85"/>
    </location>
</feature>
<feature type="strand" evidence="10">
    <location>
        <begin position="86"/>
        <end position="94"/>
    </location>
</feature>
<feature type="turn" evidence="10">
    <location>
        <begin position="98"/>
        <end position="100"/>
    </location>
</feature>
<feature type="helix" evidence="10">
    <location>
        <begin position="101"/>
        <end position="111"/>
    </location>
</feature>
<feature type="helix" evidence="11">
    <location>
        <begin position="115"/>
        <end position="117"/>
    </location>
</feature>
<feature type="strand" evidence="10">
    <location>
        <begin position="121"/>
        <end position="127"/>
    </location>
</feature>
<feature type="helix" evidence="10">
    <location>
        <begin position="137"/>
        <end position="143"/>
    </location>
</feature>
<feature type="turn" evidence="10">
    <location>
        <begin position="144"/>
        <end position="148"/>
    </location>
</feature>
<feature type="strand" evidence="11">
    <location>
        <begin position="149"/>
        <end position="152"/>
    </location>
</feature>
<feature type="strand" evidence="10">
    <location>
        <begin position="154"/>
        <end position="160"/>
    </location>
</feature>
<feature type="helix" evidence="10">
    <location>
        <begin position="161"/>
        <end position="163"/>
    </location>
</feature>
<feature type="helix" evidence="10">
    <location>
        <begin position="167"/>
        <end position="182"/>
    </location>
</feature>
<proteinExistence type="evidence at protein level"/>
<protein>
    <recommendedName>
        <fullName>ADP-ribosylation factor-like protein 1</fullName>
    </recommendedName>
    <alternativeName>
        <fullName>Arf-like GTPase 1</fullName>
    </alternativeName>
</protein>
<accession>P38116</accession>
<accession>D6VQG0</accession>
<reference key="1">
    <citation type="journal article" date="1997" name="J. Biol. Chem.">
        <title>Characterization of an ADP-ribosylation factor-like 1 protein in Saccharomyces cerevisiae.</title>
        <authorList>
            <person name="Lee F.-J.S."/>
            <person name="Huang C.F."/>
            <person name="Yu W.L."/>
            <person name="Buu L.M."/>
            <person name="Lin C.Y."/>
            <person name="Huang M.C."/>
            <person name="Moss J."/>
            <person name="Vaughan M."/>
        </authorList>
    </citation>
    <scope>NUCLEOTIDE SEQUENCE [MRNA]</scope>
    <scope>CHARACTERIZATION</scope>
    <scope>MYRISTOYLATION AT GLY-2</scope>
</reference>
<reference key="2">
    <citation type="journal article" date="1994" name="EMBO J.">
        <title>Complete DNA sequence of yeast chromosome II.</title>
        <authorList>
            <person name="Feldmann H."/>
            <person name="Aigle M."/>
            <person name="Aljinovic G."/>
            <person name="Andre B."/>
            <person name="Baclet M.C."/>
            <person name="Barthe C."/>
            <person name="Baur A."/>
            <person name="Becam A.-M."/>
            <person name="Biteau N."/>
            <person name="Boles E."/>
            <person name="Brandt T."/>
            <person name="Brendel M."/>
            <person name="Brueckner M."/>
            <person name="Bussereau F."/>
            <person name="Christiansen C."/>
            <person name="Contreras R."/>
            <person name="Crouzet M."/>
            <person name="Cziepluch C."/>
            <person name="Demolis N."/>
            <person name="Delaveau T."/>
            <person name="Doignon F."/>
            <person name="Domdey H."/>
            <person name="Duesterhus S."/>
            <person name="Dubois E."/>
            <person name="Dujon B."/>
            <person name="El Bakkoury M."/>
            <person name="Entian K.-D."/>
            <person name="Feuermann M."/>
            <person name="Fiers W."/>
            <person name="Fobo G.M."/>
            <person name="Fritz C."/>
            <person name="Gassenhuber J."/>
            <person name="Glansdorff N."/>
            <person name="Goffeau A."/>
            <person name="Grivell L.A."/>
            <person name="de Haan M."/>
            <person name="Hein C."/>
            <person name="Herbert C.J."/>
            <person name="Hollenberg C.P."/>
            <person name="Holmstroem K."/>
            <person name="Jacq C."/>
            <person name="Jacquet M."/>
            <person name="Jauniaux J.-C."/>
            <person name="Jonniaux J.-L."/>
            <person name="Kallesoee T."/>
            <person name="Kiesau P."/>
            <person name="Kirchrath L."/>
            <person name="Koetter P."/>
            <person name="Korol S."/>
            <person name="Liebl S."/>
            <person name="Logghe M."/>
            <person name="Lohan A.J.E."/>
            <person name="Louis E.J."/>
            <person name="Li Z.Y."/>
            <person name="Maat M.J."/>
            <person name="Mallet L."/>
            <person name="Mannhaupt G."/>
            <person name="Messenguy F."/>
            <person name="Miosga T."/>
            <person name="Molemans F."/>
            <person name="Mueller S."/>
            <person name="Nasr F."/>
            <person name="Obermaier B."/>
            <person name="Perea J."/>
            <person name="Pierard A."/>
            <person name="Piravandi E."/>
            <person name="Pohl F.M."/>
            <person name="Pohl T.M."/>
            <person name="Potier S."/>
            <person name="Proft M."/>
            <person name="Purnelle B."/>
            <person name="Ramezani Rad M."/>
            <person name="Rieger M."/>
            <person name="Rose M."/>
            <person name="Schaaff-Gerstenschlaeger I."/>
            <person name="Scherens B."/>
            <person name="Schwarzlose C."/>
            <person name="Skala J."/>
            <person name="Slonimski P.P."/>
            <person name="Smits P.H.M."/>
            <person name="Souciet J.-L."/>
            <person name="Steensma H.Y."/>
            <person name="Stucka R."/>
            <person name="Urrestarazu L.A."/>
            <person name="van der Aart Q.J.M."/>
            <person name="Van Dyck L."/>
            <person name="Vassarotti A."/>
            <person name="Vetter I."/>
            <person name="Vierendeels F."/>
            <person name="Vissers S."/>
            <person name="Wagner G."/>
            <person name="de Wergifosse P."/>
            <person name="Wolfe K.H."/>
            <person name="Zagulski M."/>
            <person name="Zimmermann F.K."/>
            <person name="Mewes H.-W."/>
            <person name="Kleine K."/>
        </authorList>
    </citation>
    <scope>NUCLEOTIDE SEQUENCE [LARGE SCALE GENOMIC DNA]</scope>
    <source>
        <strain>ATCC 204508 / S288c</strain>
    </source>
</reference>
<reference key="3">
    <citation type="journal article" date="2014" name="G3 (Bethesda)">
        <title>The reference genome sequence of Saccharomyces cerevisiae: Then and now.</title>
        <authorList>
            <person name="Engel S.R."/>
            <person name="Dietrich F.S."/>
            <person name="Fisk D.G."/>
            <person name="Binkley G."/>
            <person name="Balakrishnan R."/>
            <person name="Costanzo M.C."/>
            <person name="Dwight S.S."/>
            <person name="Hitz B.C."/>
            <person name="Karra K."/>
            <person name="Nash R.S."/>
            <person name="Weng S."/>
            <person name="Wong E.D."/>
            <person name="Lloyd P."/>
            <person name="Skrzypek M.S."/>
            <person name="Miyasato S.R."/>
            <person name="Simison M."/>
            <person name="Cherry J.M."/>
        </authorList>
    </citation>
    <scope>GENOME REANNOTATION</scope>
    <source>
        <strain>ATCC 204508 / S288c</strain>
    </source>
</reference>
<reference key="4">
    <citation type="journal article" date="2002" name="Mol. Cell. Biol.">
        <title>Yeast Ysl2p, homologous to Sec7 domain guanine nucleotide exchange factors, functions in endocytosis and maintenance of vacuole integrity and interacts with the Arf-Like small GTPase Arl1p.</title>
        <authorList>
            <person name="Jochum A."/>
            <person name="Jackson D."/>
            <person name="Schwarz H."/>
            <person name="Pipkorn R."/>
            <person name="Singer-Krueger B."/>
        </authorList>
    </citation>
    <scope>FUNCTION</scope>
    <scope>INTERACTION WITH MON2</scope>
</reference>
<reference key="5">
    <citation type="journal article" date="2003" name="Curr. Biol.">
        <title>Golgi recruitment of GRIP domain proteins by Arf-like GTPase 1 is regulated by Arf-like GTPase 3.</title>
        <authorList>
            <person name="Setty S.R.G."/>
            <person name="Shin M.E."/>
            <person name="Yoshino A."/>
            <person name="Marks M.S."/>
            <person name="Burd C.G."/>
        </authorList>
    </citation>
    <scope>FUNCTION</scope>
    <scope>SUBCELLULAR LOCATION</scope>
    <scope>INTERACTION WITH IMH1</scope>
</reference>
<reference key="6">
    <citation type="journal article" date="2003" name="Curr. Biol.">
        <title>The ARF-like GTPases Arl1p and Arl3p act in a pathway that interacts with vesicle-tethering factors at the Golgi apparatus.</title>
        <authorList>
            <person name="Panic B."/>
            <person name="Whyte J.R.C."/>
            <person name="Munro S."/>
        </authorList>
    </citation>
    <scope>FUNCTION</scope>
    <scope>SUBCELLULAR LOCATION</scope>
    <scope>INTERACTION WITH IMH1</scope>
</reference>
<reference key="7">
    <citation type="journal article" date="2003" name="Nature">
        <title>Global analysis of protein expression in yeast.</title>
        <authorList>
            <person name="Ghaemmaghami S."/>
            <person name="Huh W.-K."/>
            <person name="Bower K."/>
            <person name="Howson R.W."/>
            <person name="Belle A."/>
            <person name="Dephoure N."/>
            <person name="O'Shea E.K."/>
            <person name="Weissman J.S."/>
        </authorList>
    </citation>
    <scope>LEVEL OF PROTEIN EXPRESSION [LARGE SCALE ANALYSIS]</scope>
</reference>
<reference key="8">
    <citation type="journal article" date="2017" name="Mol. Biol. Cell">
        <title>Quantitative high-content imaging identifies novel regulators of Neo1 trafficking at endosomes.</title>
        <authorList>
            <person name="Dalton L.E."/>
            <person name="Bean B.D.M."/>
            <person name="Davey M."/>
            <person name="Conibear E."/>
        </authorList>
    </citation>
    <scope>DISRUPTION PHENOTYPE</scope>
</reference>
<reference key="9">
    <citation type="journal article" date="2001" name="J. Biol. Chem.">
        <title>Structures of yeast ARF2 and ARL1: distinct roles for the N-terminus in the structure and function of ARF family GTPases.</title>
        <authorList>
            <person name="Amor J.C."/>
            <person name="Horton J.R."/>
            <person name="Zhu X."/>
            <person name="Wang Y."/>
            <person name="Sullards C."/>
            <person name="Ringe D."/>
            <person name="Cheng X."/>
            <person name="Kahn R.A."/>
        </authorList>
    </citation>
    <scope>X-RAY CRYSTALLOGRAPHY (3.17 ANGSTROMS)</scope>
    <scope>SUBUNIT</scope>
</reference>